<protein>
    <recommendedName>
        <fullName evidence="2">Beta-agarase AgaA34</fullName>
        <ecNumber>3.2.1.81</ecNumber>
    </recommendedName>
</protein>
<comment type="catalytic activity">
    <reaction evidence="1">
        <text>Hydrolysis of (1-&gt;4)-beta-D-galactosidic linkages in agarose, giving the tetramer as the predominant product.</text>
        <dbReference type="EC" id="3.2.1.81"/>
    </reaction>
</comment>
<comment type="biophysicochemical properties">
    <kinetics>
        <KM evidence="1">0.117 uM for agarose</KM>
        <KM evidence="1">0.333 uM for neoagarotetraose</KM>
        <Vmax evidence="1">529.0 umol/min/mg enzyme toward agarose</Vmax>
        <Vmax evidence="1">313.0 umol/min/mg enzyme toward neoagarotetraose</Vmax>
    </kinetics>
    <phDependence>
        <text evidence="1">Optimum pH is 8.0. Active from pH 6.0 to 10.0.</text>
    </phDependence>
    <temperatureDependence>
        <text evidence="1">Optimum temperature is 40 degrees Celsius. Active at temperatures up to 50 degrees Celsius.</text>
    </temperatureDependence>
</comment>
<comment type="subcellular location">
    <subcellularLocation>
        <location evidence="1">Secreted</location>
    </subcellularLocation>
</comment>
<comment type="similarity">
    <text evidence="1">Belongs to the glycosyl hydrolase 16 family.</text>
</comment>
<organism>
    <name type="scientific">Agarivorans albus</name>
    <dbReference type="NCBI Taxonomy" id="182262"/>
    <lineage>
        <taxon>Bacteria</taxon>
        <taxon>Pseudomonadati</taxon>
        <taxon>Pseudomonadota</taxon>
        <taxon>Gammaproteobacteria</taxon>
        <taxon>Alteromonadales</taxon>
        <taxon>Alteromonadaceae</taxon>
        <taxon>Agarivorans</taxon>
    </lineage>
</organism>
<evidence type="ECO:0000269" key="1">
    <source>
    </source>
</evidence>
<evidence type="ECO:0000303" key="2">
    <source>
    </source>
</evidence>
<evidence type="ECO:0000305" key="3"/>
<keyword id="KW-0903">Direct protein sequencing</keyword>
<keyword id="KW-0326">Glycosidase</keyword>
<keyword id="KW-0378">Hydrolase</keyword>
<keyword id="KW-0964">Secreted</keyword>
<reference evidence="3" key="1">
    <citation type="journal article" date="2008" name="Appl. Microbiol. Biotechnol.">
        <title>Purification and characterization of a novel beta-agarase, AgaA34, from Agarivorans albus YKW-34.</title>
        <authorList>
            <person name="Fu X.T."/>
            <person name="Lin H."/>
            <person name="Kim S.M."/>
        </authorList>
    </citation>
    <scope>PROTEIN SEQUENCE</scope>
    <scope>CATALYTIC ACTIVITY</scope>
    <scope>BIOPHYSICOCHEMICAL PROPERTIES</scope>
    <scope>SUBCELLULAR LOCATION</scope>
    <source>
        <strain evidence="1">YKW-34</strain>
    </source>
</reference>
<dbReference type="EC" id="3.2.1.81"/>
<dbReference type="SABIO-RK" id="P85974"/>
<dbReference type="GO" id="GO:0005576">
    <property type="term" value="C:extracellular region"/>
    <property type="evidence" value="ECO:0000314"/>
    <property type="project" value="UniProtKB"/>
</dbReference>
<dbReference type="GO" id="GO:0033916">
    <property type="term" value="F:beta-agarase activity"/>
    <property type="evidence" value="ECO:0000314"/>
    <property type="project" value="UniProtKB"/>
</dbReference>
<dbReference type="GO" id="GO:0016052">
    <property type="term" value="P:carbohydrate catabolic process"/>
    <property type="evidence" value="ECO:0000314"/>
    <property type="project" value="UniProtKB"/>
</dbReference>
<sequence>ASLVTSFEEA</sequence>
<name>AGA34_AGAAL</name>
<feature type="chain" id="PRO_0000347325" description="Beta-agarase AgaA34">
    <location>
        <begin position="1"/>
        <end position="10" status="greater than"/>
    </location>
</feature>
<feature type="non-terminal residue" evidence="2">
    <location>
        <position position="10"/>
    </location>
</feature>
<proteinExistence type="evidence at protein level"/>
<accession>P85974</accession>